<proteinExistence type="inferred from homology"/>
<keyword id="KW-0031">Aminopeptidase</keyword>
<keyword id="KW-0963">Cytoplasm</keyword>
<keyword id="KW-0378">Hydrolase</keyword>
<keyword id="KW-0645">Protease</keyword>
<keyword id="KW-1185">Reference proteome</keyword>
<dbReference type="EC" id="3.4.11.5"/>
<dbReference type="EMBL" id="AE002098">
    <property type="protein sequence ID" value="AAF41334.1"/>
    <property type="molecule type" value="Genomic_DNA"/>
</dbReference>
<dbReference type="PIR" id="B81141">
    <property type="entry name" value="B81141"/>
</dbReference>
<dbReference type="RefSeq" id="NP_273966.1">
    <property type="nucleotide sequence ID" value="NC_003112.2"/>
</dbReference>
<dbReference type="RefSeq" id="WP_002225339.1">
    <property type="nucleotide sequence ID" value="NC_003112.2"/>
</dbReference>
<dbReference type="SMR" id="Q9JZR6"/>
<dbReference type="STRING" id="122586.NMB0927"/>
<dbReference type="ESTHER" id="neigo-pip">
    <property type="family name" value="Proline_iminopeptidase"/>
</dbReference>
<dbReference type="MEROPS" id="S33.001"/>
<dbReference type="PaxDb" id="122586-NMB0927"/>
<dbReference type="KEGG" id="nme:NMB0927"/>
<dbReference type="PATRIC" id="fig|122586.8.peg.1176"/>
<dbReference type="HOGENOM" id="CLU_043739_2_2_4"/>
<dbReference type="InParanoid" id="Q9JZR6"/>
<dbReference type="OrthoDB" id="9796770at2"/>
<dbReference type="Proteomes" id="UP000000425">
    <property type="component" value="Chromosome"/>
</dbReference>
<dbReference type="GO" id="GO:0005737">
    <property type="term" value="C:cytoplasm"/>
    <property type="evidence" value="ECO:0007669"/>
    <property type="project" value="UniProtKB-SubCell"/>
</dbReference>
<dbReference type="GO" id="GO:0004177">
    <property type="term" value="F:aminopeptidase activity"/>
    <property type="evidence" value="ECO:0007669"/>
    <property type="project" value="UniProtKB-KW"/>
</dbReference>
<dbReference type="GO" id="GO:0006508">
    <property type="term" value="P:proteolysis"/>
    <property type="evidence" value="ECO:0007669"/>
    <property type="project" value="UniProtKB-KW"/>
</dbReference>
<dbReference type="Gene3D" id="3.40.50.1820">
    <property type="entry name" value="alpha/beta hydrolase"/>
    <property type="match status" value="1"/>
</dbReference>
<dbReference type="InterPro" id="IPR000073">
    <property type="entry name" value="AB_hydrolase_1"/>
</dbReference>
<dbReference type="InterPro" id="IPR029058">
    <property type="entry name" value="AB_hydrolase_fold"/>
</dbReference>
<dbReference type="InterPro" id="IPR002410">
    <property type="entry name" value="Peptidase_S33"/>
</dbReference>
<dbReference type="InterPro" id="IPR005944">
    <property type="entry name" value="Pro_iminopeptidase"/>
</dbReference>
<dbReference type="NCBIfam" id="TIGR01249">
    <property type="entry name" value="pro_imino_pep_1"/>
    <property type="match status" value="1"/>
</dbReference>
<dbReference type="PANTHER" id="PTHR43722">
    <property type="entry name" value="PROLINE IMINOPEPTIDASE"/>
    <property type="match status" value="1"/>
</dbReference>
<dbReference type="PANTHER" id="PTHR43722:SF1">
    <property type="entry name" value="PROLINE IMINOPEPTIDASE"/>
    <property type="match status" value="1"/>
</dbReference>
<dbReference type="Pfam" id="PF00561">
    <property type="entry name" value="Abhydrolase_1"/>
    <property type="match status" value="1"/>
</dbReference>
<dbReference type="PIRSF" id="PIRSF006431">
    <property type="entry name" value="Pept_S33"/>
    <property type="match status" value="1"/>
</dbReference>
<dbReference type="PRINTS" id="PR00111">
    <property type="entry name" value="ABHYDROLASE"/>
</dbReference>
<dbReference type="PRINTS" id="PR00793">
    <property type="entry name" value="PROAMNOPTASE"/>
</dbReference>
<dbReference type="SUPFAM" id="SSF53474">
    <property type="entry name" value="alpha/beta-Hydrolases"/>
    <property type="match status" value="1"/>
</dbReference>
<evidence type="ECO:0000250" key="1"/>
<evidence type="ECO:0000255" key="2"/>
<evidence type="ECO:0000305" key="3"/>
<gene>
    <name type="primary">pip</name>
    <name type="ordered locus">NMB0927</name>
</gene>
<sequence>MYEIKQPFHSGYLQVSEIHQIYWEESGNPDGVPVIFLHGGPGAGASPECRGFFNPDVFRIVIIDQRGCGRSRPYACAEDNTTWDLVADIEKVREMLGIGKWLVFGGSWGSTLSLAYAQTHPERVKGLVLRGIFLCRPSETVWLNEAGGVSRIYPEQWQKFVAPIAENRRNRLIEAYHGLLFHQDEEVCLSAAKAWADWESYLIRFEPEEVDEDAYASLAIARLENHYFVNGGWLQGDRAILNNIGKIRHIPTIIVQGRYDLCTPMQSAWALSKAFPEAELRVVQAGHRAFDPPLVDALVQAVEDILPHLL</sequence>
<comment type="function">
    <text evidence="1">Specifically catalyzes the removal of N-terminal proline residues from peptides.</text>
</comment>
<comment type="catalytic activity">
    <reaction>
        <text>Release of N-terminal proline from a peptide.</text>
        <dbReference type="EC" id="3.4.11.5"/>
    </reaction>
</comment>
<comment type="subcellular location">
    <subcellularLocation>
        <location evidence="1">Cytoplasm</location>
    </subcellularLocation>
</comment>
<comment type="similarity">
    <text evidence="3">Belongs to the peptidase S33 family.</text>
</comment>
<organism>
    <name type="scientific">Neisseria meningitidis serogroup B (strain ATCC BAA-335 / MC58)</name>
    <dbReference type="NCBI Taxonomy" id="122586"/>
    <lineage>
        <taxon>Bacteria</taxon>
        <taxon>Pseudomonadati</taxon>
        <taxon>Pseudomonadota</taxon>
        <taxon>Betaproteobacteria</taxon>
        <taxon>Neisseriales</taxon>
        <taxon>Neisseriaceae</taxon>
        <taxon>Neisseria</taxon>
    </lineage>
</organism>
<reference key="1">
    <citation type="journal article" date="2000" name="Science">
        <title>Complete genome sequence of Neisseria meningitidis serogroup B strain MC58.</title>
        <authorList>
            <person name="Tettelin H."/>
            <person name="Saunders N.J."/>
            <person name="Heidelberg J.F."/>
            <person name="Jeffries A.C."/>
            <person name="Nelson K.E."/>
            <person name="Eisen J.A."/>
            <person name="Ketchum K.A."/>
            <person name="Hood D.W."/>
            <person name="Peden J.F."/>
            <person name="Dodson R.J."/>
            <person name="Nelson W.C."/>
            <person name="Gwinn M.L."/>
            <person name="DeBoy R.T."/>
            <person name="Peterson J.D."/>
            <person name="Hickey E.K."/>
            <person name="Haft D.H."/>
            <person name="Salzberg S.L."/>
            <person name="White O."/>
            <person name="Fleischmann R.D."/>
            <person name="Dougherty B.A."/>
            <person name="Mason T.M."/>
            <person name="Ciecko A."/>
            <person name="Parksey D.S."/>
            <person name="Blair E."/>
            <person name="Cittone H."/>
            <person name="Clark E.B."/>
            <person name="Cotton M.D."/>
            <person name="Utterback T.R."/>
            <person name="Khouri H.M."/>
            <person name="Qin H."/>
            <person name="Vamathevan J.J."/>
            <person name="Gill J."/>
            <person name="Scarlato V."/>
            <person name="Masignani V."/>
            <person name="Pizza M."/>
            <person name="Grandi G."/>
            <person name="Sun L."/>
            <person name="Smith H.O."/>
            <person name="Fraser C.M."/>
            <person name="Moxon E.R."/>
            <person name="Rappuoli R."/>
            <person name="Venter J.C."/>
        </authorList>
    </citation>
    <scope>NUCLEOTIDE SEQUENCE [LARGE SCALE GENOMIC DNA]</scope>
    <source>
        <strain>ATCC BAA-335 / MC58</strain>
    </source>
</reference>
<name>PIP_NEIMB</name>
<protein>
    <recommendedName>
        <fullName>Proline iminopeptidase</fullName>
        <shortName>PIP</shortName>
        <ecNumber>3.4.11.5</ecNumber>
    </recommendedName>
    <alternativeName>
        <fullName>Prolyl aminopeptidase</fullName>
        <shortName>PAP</shortName>
    </alternativeName>
</protein>
<accession>Q9JZR6</accession>
<feature type="chain" id="PRO_0000080843" description="Proline iminopeptidase">
    <location>
        <begin position="1"/>
        <end position="310"/>
    </location>
</feature>
<feature type="domain" description="AB hydrolase-1" evidence="2">
    <location>
        <begin position="33"/>
        <end position="290"/>
    </location>
</feature>
<feature type="active site" description="Nucleophile" evidence="1">
    <location>
        <position position="107"/>
    </location>
</feature>
<feature type="active site" evidence="1">
    <location>
        <position position="260"/>
    </location>
</feature>
<feature type="active site" description="Proton donor" evidence="1">
    <location>
        <position position="287"/>
    </location>
</feature>